<proteinExistence type="evidence at protein level"/>
<gene>
    <name evidence="6" type="primary">nps10</name>
</gene>
<reference key="1">
    <citation type="journal article" date="2018" name="Fungal Genet. Biol.">
        <title>Multi-genome analysis identifies functional and phylogenetic diversity of basidiomycete adenylate-forming reductases.</title>
        <authorList>
            <person name="Brandenburger E."/>
            <person name="Braga D."/>
            <person name="Kombrink A."/>
            <person name="Lackner G."/>
            <person name="Gressler J."/>
            <person name="Kuenzler M."/>
            <person name="Hoffmeister D."/>
        </authorList>
    </citation>
    <scope>NUCLEOTIDE SEQUENCE [MRNA]</scope>
    <scope>FUNCTION</scope>
    <scope>CATALYTIC ACTIVITY</scope>
    <source>
        <strain>JMRC 9984</strain>
    </source>
</reference>
<organism>
    <name type="scientific">Heterobasidion annosum</name>
    <name type="common">Root rot fungus</name>
    <name type="synonym">Polyporus annosus</name>
    <dbReference type="NCBI Taxonomy" id="13563"/>
    <lineage>
        <taxon>Eukaryota</taxon>
        <taxon>Fungi</taxon>
        <taxon>Dikarya</taxon>
        <taxon>Basidiomycota</taxon>
        <taxon>Agaricomycotina</taxon>
        <taxon>Agaricomycetes</taxon>
        <taxon>Russulales</taxon>
        <taxon>Bondarzewiaceae</taxon>
        <taxon>Heterobasidion</taxon>
        <taxon>Heterobasidion annosum species complex</taxon>
    </lineage>
</organism>
<dbReference type="EC" id="1.2.1.-" evidence="5"/>
<dbReference type="EMBL" id="KX118589">
    <property type="protein sequence ID" value="ANX99773.1"/>
    <property type="molecule type" value="mRNA"/>
</dbReference>
<dbReference type="SMR" id="A0A1B1ZGB5"/>
<dbReference type="GO" id="GO:0005524">
    <property type="term" value="F:ATP binding"/>
    <property type="evidence" value="ECO:0007669"/>
    <property type="project" value="UniProtKB-KW"/>
</dbReference>
<dbReference type="GO" id="GO:0016491">
    <property type="term" value="F:oxidoreductase activity"/>
    <property type="evidence" value="ECO:0007669"/>
    <property type="project" value="UniProtKB-KW"/>
</dbReference>
<dbReference type="GO" id="GO:0031177">
    <property type="term" value="F:phosphopantetheine binding"/>
    <property type="evidence" value="ECO:0007669"/>
    <property type="project" value="InterPro"/>
</dbReference>
<dbReference type="GO" id="GO:0009058">
    <property type="term" value="P:biosynthetic process"/>
    <property type="evidence" value="ECO:0007669"/>
    <property type="project" value="UniProtKB-ARBA"/>
</dbReference>
<dbReference type="Gene3D" id="1.10.1200.10">
    <property type="entry name" value="ACP-like"/>
    <property type="match status" value="1"/>
</dbReference>
<dbReference type="Gene3D" id="3.40.50.12780">
    <property type="entry name" value="N-terminal domain of ligase-like"/>
    <property type="match status" value="1"/>
</dbReference>
<dbReference type="Gene3D" id="3.40.50.720">
    <property type="entry name" value="NAD(P)-binding Rossmann-like Domain"/>
    <property type="match status" value="1"/>
</dbReference>
<dbReference type="InterPro" id="IPR036736">
    <property type="entry name" value="ACP-like_sf"/>
</dbReference>
<dbReference type="InterPro" id="IPR051414">
    <property type="entry name" value="Adenylate-forming_Reductase"/>
</dbReference>
<dbReference type="InterPro" id="IPR000873">
    <property type="entry name" value="AMP-dep_synth/lig_dom"/>
</dbReference>
<dbReference type="InterPro" id="IPR042099">
    <property type="entry name" value="ANL_N_sf"/>
</dbReference>
<dbReference type="InterPro" id="IPR013120">
    <property type="entry name" value="Far_NAD-bd"/>
</dbReference>
<dbReference type="InterPro" id="IPR036291">
    <property type="entry name" value="NAD(P)-bd_dom_sf"/>
</dbReference>
<dbReference type="InterPro" id="IPR020806">
    <property type="entry name" value="PKS_PP-bd"/>
</dbReference>
<dbReference type="PANTHER" id="PTHR43439:SF2">
    <property type="entry name" value="ENZYME, PUTATIVE (JCVI)-RELATED"/>
    <property type="match status" value="1"/>
</dbReference>
<dbReference type="PANTHER" id="PTHR43439">
    <property type="entry name" value="PHENYLACETATE-COENZYME A LIGASE"/>
    <property type="match status" value="1"/>
</dbReference>
<dbReference type="Pfam" id="PF00501">
    <property type="entry name" value="AMP-binding"/>
    <property type="match status" value="1"/>
</dbReference>
<dbReference type="Pfam" id="PF23562">
    <property type="entry name" value="AMP-binding_C_3"/>
    <property type="match status" value="1"/>
</dbReference>
<dbReference type="Pfam" id="PF07993">
    <property type="entry name" value="NAD_binding_4"/>
    <property type="match status" value="1"/>
</dbReference>
<dbReference type="SMART" id="SM00823">
    <property type="entry name" value="PKS_PP"/>
    <property type="match status" value="1"/>
</dbReference>
<dbReference type="SUPFAM" id="SSF56801">
    <property type="entry name" value="Acetyl-CoA synthetase-like"/>
    <property type="match status" value="1"/>
</dbReference>
<dbReference type="SUPFAM" id="SSF47336">
    <property type="entry name" value="ACP-like"/>
    <property type="match status" value="1"/>
</dbReference>
<dbReference type="SUPFAM" id="SSF51735">
    <property type="entry name" value="NAD(P)-binding Rossmann-fold domains"/>
    <property type="match status" value="1"/>
</dbReference>
<dbReference type="PROSITE" id="PS50075">
    <property type="entry name" value="CARRIER"/>
    <property type="match status" value="1"/>
</dbReference>
<sequence length="1088" mass="118844">MSSVSIQIPLPTPPPTQAHNSQTFCAPPLGSLTLPEVFDWHSKNSPNHPLYSYINIDGSIRTITWAESVRAVHRAARRMRTELGLSSDSVPDLTAGKPVVGILAVLDSITYSTLVTGVQYAGFTPFPISPRNSHAAVVHLINKAFVSHIIVEESCRGLLEDAFQSLKSDLTSPSMPTTSVAPVFEDLYVSSDSAQGEASVAFETPAWDSNAIIIHSSGSTAFPKPIAWTHGRAMQLSTVPWYGERDLTGKRMACHAMPMYHTMGYLLLAWAASSGLVLNGFRPQSPATKSTIENVFSASLEAHSDIIFTVPSFVEAWSKNPAYVKTLAELDGVMFGGGPLGKQVGDVLVSANVTLFNLYGSTEAGVLSSTVPADFNIDWEYFRISDIAKVAFVPNEENKLELVVLSSNLNTPSVFNAVYEDVPAYATSDLFEPHPTKPGYWKIFGRTDDQIMHSTGEKTNPGPLEHILNQDPHVRASLMFGRGQFQAGVLVDPTSEYRFDPSDEEKLAEFRNLIWPSVEEMNAYAPQHSRVFKEMILVSSPSKPFTFTAKNSVRRQAVIQEYDDEIKAIYFAVDETGRADIPSPTAWDSAKTLGFIRAVVQKVMKKEVQDGDDFFQHGCDSLQATWIRNTILRSLKDSTDANTQDISNSFIYQHPSVASLASFVSSVAQGQNNINSGLDRAQEMNIMVARYSKDFPPHVPSAPQPSKDTILLTGSTGALGSNILALLIASPSVARIYAFNRKSRSSIPLLDRQKSALLERGLDPSLAASKKVVLVEGDVTKQDLGISTELLSEIRVSITHIIHNAWPVNFNLSLESFEPQVKGLRHLVDLSLSSPHPSPPRVLFTASIGMFNDITRAEPVKEVPIGANVAVSNGYGESKWVGETILAEAAKQTPLRSTSIRVGQLSGGINGAWTTAEWLPSLVRSAIHLKALPDCEGDVSWIPVNVAAAAIVDFCQSDSSIMNLVHPRPATWSSIFSAFASVLNIPLVPYTEWLALLRKSAEDAGDAPDADSLQQNPGLRLLDWYHSAFVHENDSAYQYADTMGFPKFDMTNSLRASGTLADEGLPQLGESDVKLWVDYWKKVGFFPA</sequence>
<evidence type="ECO:0000250" key="1">
    <source>
        <dbReference type="UniProtKB" id="Q6RKB1"/>
    </source>
</evidence>
<evidence type="ECO:0000255" key="2"/>
<evidence type="ECO:0000255" key="3">
    <source>
        <dbReference type="PROSITE-ProRule" id="PRU00258"/>
    </source>
</evidence>
<evidence type="ECO:0000256" key="4">
    <source>
        <dbReference type="SAM" id="MobiDB-lite"/>
    </source>
</evidence>
<evidence type="ECO:0000269" key="5">
    <source>
    </source>
</evidence>
<evidence type="ECO:0000303" key="6">
    <source>
    </source>
</evidence>
<evidence type="ECO:0000305" key="7"/>
<evidence type="ECO:0000305" key="8">
    <source>
    </source>
</evidence>
<comment type="function">
    <text evidence="5">Adenylate-forming reductase, a natural product biosynthesis enzyme that resembles non-ribosomal peptide synthetases, yet serves to modify one substrate, rather than to condense two or more building blocks. The A-domain preferentially accepts phenylpyruvic acid and benzoic acid as substrate. The natural product of the enzyme is not yet known.</text>
</comment>
<comment type="domain">
    <text evidence="8">Contains three distinct domains: an adenylation (A) domain that activates the substrate amino acid which is subsequently covalently linked as a thioester (aminoacyl-S-PCP) to the 4'-phosphopantetheine prosthetic group of the second domain, the peptidyl carrier protein (PCP) domain, as well as a reductase (R) domain of the short-chain dehydrogenase/reductase (SDR) type.</text>
</comment>
<comment type="similarity">
    <text evidence="7">Belongs to the adenylate-forming reductase family.</text>
</comment>
<feature type="chain" id="PRO_0000442639" description="Adenylate-forming reductase Nps10">
    <location>
        <begin position="1"/>
        <end position="1088"/>
    </location>
</feature>
<feature type="domain" description="Carrier" evidence="3 8">
    <location>
        <begin position="586"/>
        <end position="668"/>
    </location>
</feature>
<feature type="region of interest" description="Disordered" evidence="4">
    <location>
        <begin position="1"/>
        <end position="22"/>
    </location>
</feature>
<feature type="region of interest" description="Adenylation (A) domain" evidence="2 8">
    <location>
        <begin position="38"/>
        <end position="451"/>
    </location>
</feature>
<feature type="region of interest" description="Reductase (R) domain" evidence="2 8">
    <location>
        <begin position="712"/>
        <end position="951"/>
    </location>
</feature>
<feature type="binding site" evidence="1">
    <location>
        <position position="261"/>
    </location>
    <ligand>
        <name>AMP</name>
        <dbReference type="ChEBI" id="CHEBI:456215"/>
    </ligand>
</feature>
<feature type="binding site" evidence="1">
    <location>
        <begin position="357"/>
        <end position="358"/>
    </location>
    <ligand>
        <name>AMP</name>
        <dbReference type="ChEBI" id="CHEBI:456215"/>
    </ligand>
</feature>
<feature type="binding site" evidence="1">
    <location>
        <position position="362"/>
    </location>
    <ligand>
        <name>AMP</name>
        <dbReference type="ChEBI" id="CHEBI:456215"/>
    </ligand>
</feature>
<feature type="binding site" evidence="1">
    <location>
        <begin position="443"/>
        <end position="446"/>
    </location>
    <ligand>
        <name>AMP</name>
        <dbReference type="ChEBI" id="CHEBI:456215"/>
    </ligand>
</feature>
<feature type="binding site" evidence="1">
    <location>
        <begin position="716"/>
        <end position="719"/>
    </location>
    <ligand>
        <name>NADP(+)</name>
        <dbReference type="ChEBI" id="CHEBI:58349"/>
    </ligand>
</feature>
<feature type="binding site" evidence="1">
    <location>
        <begin position="804"/>
        <end position="806"/>
    </location>
    <ligand>
        <name>NADP(+)</name>
        <dbReference type="ChEBI" id="CHEBI:58349"/>
    </ligand>
</feature>
<feature type="binding site" evidence="1">
    <location>
        <position position="875"/>
    </location>
    <ligand>
        <name>NADP(+)</name>
        <dbReference type="ChEBI" id="CHEBI:58349"/>
    </ligand>
</feature>
<feature type="binding site" evidence="1">
    <location>
        <position position="879"/>
    </location>
    <ligand>
        <name>NADP(+)</name>
        <dbReference type="ChEBI" id="CHEBI:58349"/>
    </ligand>
</feature>
<feature type="modified residue" description="O-(pantetheine 4'-phosphoryl)serine" evidence="3">
    <location>
        <position position="621"/>
    </location>
</feature>
<keyword id="KW-0067">ATP-binding</keyword>
<keyword id="KW-0521">NADP</keyword>
<keyword id="KW-0547">Nucleotide-binding</keyword>
<keyword id="KW-0560">Oxidoreductase</keyword>
<keyword id="KW-0596">Phosphopantetheine</keyword>
<keyword id="KW-0597">Phosphoprotein</keyword>
<protein>
    <recommendedName>
        <fullName>Adenylate-forming reductase Nps10</fullName>
        <ecNumber evidence="5">1.2.1.-</ecNumber>
    </recommendedName>
    <alternativeName>
        <fullName evidence="6">Nonribosomal peptide synthase-like enzyme 10</fullName>
        <shortName evidence="6">NRPS-like</shortName>
    </alternativeName>
    <alternativeName>
        <fullName evidence="6">Phenylpyruvate reductase</fullName>
    </alternativeName>
</protein>
<accession>A0A1B1ZGB5</accession>
<name>NPS10_HETAN</name>